<sequence>MKRILLALLRIYKIALSPYLGSQCRFLPTCSDYARDAIVQHGAARGTWMAACRLCRCHPFTKGGYDPVPATHGTAAAPPASAAPGRPPVTVRLPRP</sequence>
<reference key="1">
    <citation type="journal article" date="2010" name="PLoS ONE">
        <title>The complete genome sequence of Cupriavidus metallidurans strain CH34, a master survivalist in harsh and anthropogenic environments.</title>
        <authorList>
            <person name="Janssen P.J."/>
            <person name="Van Houdt R."/>
            <person name="Moors H."/>
            <person name="Monsieurs P."/>
            <person name="Morin N."/>
            <person name="Michaux A."/>
            <person name="Benotmane M.A."/>
            <person name="Leys N."/>
            <person name="Vallaeys T."/>
            <person name="Lapidus A."/>
            <person name="Monchy S."/>
            <person name="Medigue C."/>
            <person name="Taghavi S."/>
            <person name="McCorkle S."/>
            <person name="Dunn J."/>
            <person name="van der Lelie D."/>
            <person name="Mergeay M."/>
        </authorList>
    </citation>
    <scope>NUCLEOTIDE SEQUENCE [LARGE SCALE GENOMIC DNA]</scope>
    <source>
        <strain>ATCC 43123 / DSM 2839 / NBRC 102507 / CH34</strain>
    </source>
</reference>
<gene>
    <name type="ordered locus">Rmet_3614</name>
</gene>
<organism>
    <name type="scientific">Cupriavidus metallidurans (strain ATCC 43123 / DSM 2839 / NBRC 102507 / CH34)</name>
    <name type="common">Ralstonia metallidurans</name>
    <dbReference type="NCBI Taxonomy" id="266264"/>
    <lineage>
        <taxon>Bacteria</taxon>
        <taxon>Pseudomonadati</taxon>
        <taxon>Pseudomonadota</taxon>
        <taxon>Betaproteobacteria</taxon>
        <taxon>Burkholderiales</taxon>
        <taxon>Burkholderiaceae</taxon>
        <taxon>Cupriavidus</taxon>
    </lineage>
</organism>
<evidence type="ECO:0000255" key="1">
    <source>
        <dbReference type="HAMAP-Rule" id="MF_00386"/>
    </source>
</evidence>
<evidence type="ECO:0000256" key="2">
    <source>
        <dbReference type="SAM" id="MobiDB-lite"/>
    </source>
</evidence>
<comment type="function">
    <text evidence="1">Could be involved in insertion of integral membrane proteins into the membrane.</text>
</comment>
<comment type="subcellular location">
    <subcellularLocation>
        <location evidence="1">Cell inner membrane</location>
        <topology evidence="1">Peripheral membrane protein</topology>
        <orientation evidence="1">Cytoplasmic side</orientation>
    </subcellularLocation>
</comment>
<comment type="similarity">
    <text evidence="1">Belongs to the UPF0161 family.</text>
</comment>
<dbReference type="EMBL" id="CP000352">
    <property type="protein sequence ID" value="ABF10486.1"/>
    <property type="molecule type" value="Genomic_DNA"/>
</dbReference>
<dbReference type="STRING" id="266264.Rmet_3614"/>
<dbReference type="KEGG" id="rme:Rmet_3614"/>
<dbReference type="eggNOG" id="COG0759">
    <property type="taxonomic scope" value="Bacteria"/>
</dbReference>
<dbReference type="HOGENOM" id="CLU_144811_2_2_4"/>
<dbReference type="Proteomes" id="UP000002429">
    <property type="component" value="Chromosome"/>
</dbReference>
<dbReference type="GO" id="GO:0005886">
    <property type="term" value="C:plasma membrane"/>
    <property type="evidence" value="ECO:0007669"/>
    <property type="project" value="UniProtKB-SubCell"/>
</dbReference>
<dbReference type="HAMAP" id="MF_00386">
    <property type="entry name" value="UPF0161_YidD"/>
    <property type="match status" value="1"/>
</dbReference>
<dbReference type="InterPro" id="IPR002696">
    <property type="entry name" value="Membr_insert_effic_factor_YidD"/>
</dbReference>
<dbReference type="NCBIfam" id="TIGR00278">
    <property type="entry name" value="membrane protein insertion efficiency factor YidD"/>
    <property type="match status" value="1"/>
</dbReference>
<dbReference type="PANTHER" id="PTHR33383">
    <property type="entry name" value="MEMBRANE PROTEIN INSERTION EFFICIENCY FACTOR-RELATED"/>
    <property type="match status" value="1"/>
</dbReference>
<dbReference type="PANTHER" id="PTHR33383:SF1">
    <property type="entry name" value="MEMBRANE PROTEIN INSERTION EFFICIENCY FACTOR-RELATED"/>
    <property type="match status" value="1"/>
</dbReference>
<dbReference type="Pfam" id="PF01809">
    <property type="entry name" value="YidD"/>
    <property type="match status" value="1"/>
</dbReference>
<dbReference type="SMART" id="SM01234">
    <property type="entry name" value="Haemolytic"/>
    <property type="match status" value="1"/>
</dbReference>
<proteinExistence type="inferred from homology"/>
<name>YIDD_CUPMC</name>
<accession>Q1LH90</accession>
<keyword id="KW-0997">Cell inner membrane</keyword>
<keyword id="KW-1003">Cell membrane</keyword>
<keyword id="KW-0472">Membrane</keyword>
<keyword id="KW-1185">Reference proteome</keyword>
<protein>
    <recommendedName>
        <fullName evidence="1">Putative membrane protein insertion efficiency factor</fullName>
    </recommendedName>
</protein>
<feature type="chain" id="PRO_0000253150" description="Putative membrane protein insertion efficiency factor">
    <location>
        <begin position="1"/>
        <end position="96"/>
    </location>
</feature>
<feature type="region of interest" description="Disordered" evidence="2">
    <location>
        <begin position="71"/>
        <end position="96"/>
    </location>
</feature>
<feature type="compositionally biased region" description="Low complexity" evidence="2">
    <location>
        <begin position="71"/>
        <end position="84"/>
    </location>
</feature>